<reference key="1">
    <citation type="journal article" date="2009" name="ChemBioChem">
        <title>Identification of cytochrome P450s required for fumitremorgin biosynthesis in Aspergillus fumigatus.</title>
        <authorList>
            <person name="Kato N."/>
            <person name="Suzuki H."/>
            <person name="Takagi H."/>
            <person name="Asami Y."/>
            <person name="Kakeya H."/>
            <person name="Uramoto M."/>
            <person name="Usui T."/>
            <person name="Takahashi S."/>
            <person name="Sugimoto Y."/>
            <person name="Osada H."/>
        </authorList>
    </citation>
    <scope>NUCLEOTIDE SEQUENCE [GENOMIC DNA]</scope>
    <scope>FUNCTION</scope>
    <source>
        <strain>BM939</strain>
    </source>
</reference>
<reference key="2">
    <citation type="journal article" date="2005" name="Microbiology">
        <title>Overproduction, purification and characterization of FtmPT1, a brevianamide F prenyltransferase from Aspergillus fumigatus.</title>
        <authorList>
            <person name="Grundmann A."/>
            <person name="Li S.M."/>
        </authorList>
    </citation>
    <scope>FUNCTION</scope>
</reference>
<reference key="3">
    <citation type="journal article" date="2006" name="ChemBioChem">
        <title>The fumitremorgin gene cluster of Aspergillus fumigatus: identification of a gene encoding brevianamide F synthetase.</title>
        <authorList>
            <person name="Maiya S."/>
            <person name="Grundmann A."/>
            <person name="Li S.M."/>
            <person name="Turner G."/>
        </authorList>
    </citation>
    <scope>FUNCTION</scope>
</reference>
<reference key="4">
    <citation type="journal article" date="2008" name="ChemBioChem">
        <title>FtmPT2, an N-prenyltransferase from Aspergillus fumigatus, catalyses the last step in the biosynthesis of fumitremorgin B.</title>
        <authorList>
            <person name="Grundmann A."/>
            <person name="Kuznetsova T."/>
            <person name="Afiyatullov S.S."/>
            <person name="Li S.M."/>
        </authorList>
    </citation>
    <scope>FUNCTION</scope>
</reference>
<reference key="5">
    <citation type="journal article" date="2009" name="Org. Biomol. Chem.">
        <title>FtmOx1, a non-heme Fe(II) and alpha-ketoglutarate-dependent dioxygenase, catalyses the endoperoxide formation of verruculogen in Aspergillus fumigatus.</title>
        <authorList>
            <person name="Steffan N."/>
            <person name="Grundmann A."/>
            <person name="Afiyatullov S."/>
            <person name="Ruan H."/>
            <person name="Li S.M."/>
        </authorList>
    </citation>
    <scope>FUNCTION</scope>
    <scope>CATALYTIC ACTIVITY</scope>
    <scope>COFACTOR</scope>
    <scope>SUBUNIT</scope>
    <scope>PATHWAY</scope>
</reference>
<reference key="6">
    <citation type="journal article" date="2010" name="J. Am. Chem. Soc.">
        <title>Structure-function analysis of an enzymatic prenyl transfer reaction identifies a reaction chamber with modifiable specificity.</title>
        <authorList>
            <person name="Jost M."/>
            <person name="Zocher G."/>
            <person name="Tarcz S."/>
            <person name="Matuschek M."/>
            <person name="Xie X."/>
            <person name="Li S.M."/>
            <person name="Stehle T."/>
        </authorList>
    </citation>
    <scope>FUNCTION</scope>
</reference>
<reference key="7">
    <citation type="journal article" date="2012" name="Org. Biomol. Chem.">
        <title>Breaking the regioselectivity of indole prenyltransferases: identification of regular C3-prenylated hexahydropyrrolo[2,3-b]indoles as side products of the regular C2-prenyltransferase FtmPT1.</title>
        <authorList>
            <person name="Wollinsky B."/>
            <person name="Ludwig L."/>
            <person name="Xie X."/>
            <person name="Li S.M."/>
        </authorList>
    </citation>
    <scope>FUNCTION</scope>
</reference>
<reference key="8">
    <citation type="journal article" date="2013" name="Biosci. Biotechnol. Biochem.">
        <title>A point mutation in ftmD blocks the fumitremorgin biosynthetic pathway in Aspergillus fumigatus strain Af293.</title>
        <authorList>
            <person name="Kato N."/>
            <person name="Suzuki H."/>
            <person name="Okumura H."/>
            <person name="Takahashi S."/>
            <person name="Osada H."/>
        </authorList>
    </citation>
    <scope>FUNCTION</scope>
    <scope>PATHWAY</scope>
</reference>
<protein>
    <recommendedName>
        <fullName evidence="10">Verruculogen synthase</fullName>
        <ecNumber evidence="6">1.14.11.38</ecNumber>
    </recommendedName>
    <alternativeName>
        <fullName evidence="11">Fumitremorgin biosynthesis protein F</fullName>
    </alternativeName>
</protein>
<keyword id="KW-0017">Alkaloid metabolism</keyword>
<keyword id="KW-0223">Dioxygenase</keyword>
<keyword id="KW-0408">Iron</keyword>
<keyword id="KW-0560">Oxidoreductase</keyword>
<keyword id="KW-0843">Virulence</keyword>
<comment type="function">
    <text evidence="2 3 4 5 6 7 8 9 12 13">Verruculogen synthase; part of the gene cluster that mediates the biosynthesis of fumitremorgins, indole alkaloids that carry not only intriguing chemical structures, but also interesting biological and pharmacological activities (PubMed:19763315, PubMed:23649274). The biosynthesis of fumitremorgin-type alkaloids begins by condensation of the two amino acids L-tryptophan and L-proline to brevianamide F, catalyzed by the non-ribosomal peptide synthetase ftmA (PubMed:16755625). Brevianamide F is then prenylated by the prenyltransferase ftmPT1/ftmB in the presence of dimethylallyl diphosphate, resulting in the formation of tryprostatin B (PubMed:16000710, PubMed:21105662, PubMed:23090579). The three cytochrome P450 monooxygenases, ftmP450-1/ftmC, ftmP450-2/ftmE and ftmP450-3/FtmG, are responsible for the conversion of tryprostatin B to 6-hydroxytryprostatin B, tryprostatin A to fumitremorgin C and fumitremorgin C to 12,13-dihydroxyfumitremorgin C, respectively (PubMed:19226505). The putative methyltransferase ftmMT/ftmD is expected for the conversion of 6-hydroxytryprostatin B to tryprostatin A (Probable). FtmPT2/FtmH catalyzes the prenylation of 12,13-dihydroxyfumitre-morgin C in the presence of dimethylallyl diphosphate, resulting in the formation of fumitremorgin B (PubMed:18683158). Fumitremorgin B is further converted to verruculogen by ftmOx1/ftmF via the insertion of an endoperoxide bond between the two prenyl moieties (PubMed:19763315). In some fungal species, verruculogen is further converted to fumitremorgin A, but the enzymes involved in this step have not been identified yet (Probable).</text>
</comment>
<comment type="catalytic activity">
    <reaction evidence="6">
        <text>fumitremorgin B + 2-oxoglutarate + AH2 + 2 O2 = verruculogen + succinate + A + CO2 + H2O</text>
        <dbReference type="Rhea" id="RHEA:35975"/>
        <dbReference type="ChEBI" id="CHEBI:13193"/>
        <dbReference type="ChEBI" id="CHEBI:15377"/>
        <dbReference type="ChEBI" id="CHEBI:15379"/>
        <dbReference type="ChEBI" id="CHEBI:16526"/>
        <dbReference type="ChEBI" id="CHEBI:16810"/>
        <dbReference type="ChEBI" id="CHEBI:17499"/>
        <dbReference type="ChEBI" id="CHEBI:30031"/>
        <dbReference type="ChEBI" id="CHEBI:64531"/>
        <dbReference type="ChEBI" id="CHEBI:72765"/>
        <dbReference type="EC" id="1.14.11.38"/>
    </reaction>
</comment>
<comment type="cofactor">
    <cofactor evidence="6">
        <name>Fe cation</name>
        <dbReference type="ChEBI" id="CHEBI:24875"/>
    </cofactor>
</comment>
<comment type="pathway">
    <text evidence="6 9">Mycotoxin biosynthesis.</text>
</comment>
<comment type="subunit">
    <text evidence="6">Homodimer.</text>
</comment>
<comment type="similarity">
    <text evidence="12">Belongs to the PhyH family.</text>
</comment>
<organism>
    <name type="scientific">Aspergillus fumigatus</name>
    <name type="common">Neosartorya fumigata</name>
    <dbReference type="NCBI Taxonomy" id="746128"/>
    <lineage>
        <taxon>Eukaryota</taxon>
        <taxon>Fungi</taxon>
        <taxon>Dikarya</taxon>
        <taxon>Ascomycota</taxon>
        <taxon>Pezizomycotina</taxon>
        <taxon>Eurotiomycetes</taxon>
        <taxon>Eurotiomycetidae</taxon>
        <taxon>Eurotiales</taxon>
        <taxon>Aspergillaceae</taxon>
        <taxon>Aspergillus</taxon>
        <taxon>Aspergillus subgen. Fumigati</taxon>
    </lineage>
</organism>
<proteinExistence type="evidence at protein level"/>
<accession>B9WZX5</accession>
<feature type="chain" id="PRO_0000424134" description="Verruculogen synthase">
    <location>
        <begin position="1"/>
        <end position="291"/>
    </location>
</feature>
<feature type="active site" evidence="1">
    <location>
        <position position="68"/>
    </location>
</feature>
<dbReference type="EC" id="1.14.11.38" evidence="6"/>
<dbReference type="EMBL" id="AB436628">
    <property type="protein sequence ID" value="BAH24000.1"/>
    <property type="molecule type" value="Genomic_DNA"/>
</dbReference>
<dbReference type="SMR" id="B9WZX5"/>
<dbReference type="GO" id="GO:0051213">
    <property type="term" value="F:dioxygenase activity"/>
    <property type="evidence" value="ECO:0007669"/>
    <property type="project" value="UniProtKB-KW"/>
</dbReference>
<dbReference type="GO" id="GO:1902181">
    <property type="term" value="P:verruculogen biosynthetic process"/>
    <property type="evidence" value="ECO:0000314"/>
    <property type="project" value="GO_Central"/>
</dbReference>
<dbReference type="FunFam" id="2.60.120.620:FF:000048">
    <property type="entry name" value="Verruculogen synthase"/>
    <property type="match status" value="1"/>
</dbReference>
<dbReference type="Gene3D" id="2.60.120.620">
    <property type="entry name" value="q2cbj1_9rhob like domain"/>
    <property type="match status" value="1"/>
</dbReference>
<dbReference type="InterPro" id="IPR008775">
    <property type="entry name" value="Phytyl_CoA_dOase-like"/>
</dbReference>
<dbReference type="PANTHER" id="PTHR20883:SF41">
    <property type="entry name" value="IRON_ALPHA-KETOGLUTARATE-DEPENDENT DIOXYGENASE ASQJ"/>
    <property type="match status" value="1"/>
</dbReference>
<dbReference type="PANTHER" id="PTHR20883">
    <property type="entry name" value="PHYTANOYL-COA DIOXYGENASE DOMAIN CONTAINING 1"/>
    <property type="match status" value="1"/>
</dbReference>
<dbReference type="Pfam" id="PF05721">
    <property type="entry name" value="PhyH"/>
    <property type="match status" value="1"/>
</dbReference>
<dbReference type="SUPFAM" id="SSF51197">
    <property type="entry name" value="Clavaminate synthase-like"/>
    <property type="match status" value="1"/>
</dbReference>
<evidence type="ECO:0000250" key="1">
    <source>
        <dbReference type="UniProtKB" id="Q4WAW9"/>
    </source>
</evidence>
<evidence type="ECO:0000269" key="2">
    <source>
    </source>
</evidence>
<evidence type="ECO:0000269" key="3">
    <source>
    </source>
</evidence>
<evidence type="ECO:0000269" key="4">
    <source>
    </source>
</evidence>
<evidence type="ECO:0000269" key="5">
    <source>
    </source>
</evidence>
<evidence type="ECO:0000269" key="6">
    <source>
    </source>
</evidence>
<evidence type="ECO:0000269" key="7">
    <source>
    </source>
</evidence>
<evidence type="ECO:0000269" key="8">
    <source>
    </source>
</evidence>
<evidence type="ECO:0000269" key="9">
    <source>
    </source>
</evidence>
<evidence type="ECO:0000303" key="10">
    <source>
    </source>
</evidence>
<evidence type="ECO:0000303" key="11">
    <source>
    </source>
</evidence>
<evidence type="ECO:0000305" key="12"/>
<evidence type="ECO:0000305" key="13">
    <source>
    </source>
</evidence>
<name>FTMF_ASPFM</name>
<sequence length="291" mass="32695">MTVDSKPQLQRLAADADVDRMCRLLEEDGAFILKGLLPFDVVESFNRELDVQMAIPPPKGERLLADKYPPHFKYVPNVATTCPTFRNTILINPVIHAICEAYFQRTGDYWLSAAFLREIESGMPAQPFHRDDATHPLMHYQPLEAPPISLSVIFPLTEFTEENGATEVILGSHRWTEVGTPERDQAVLATMDPGDVLIVRQRVVHAGGGNRTTAGKPRRVVLAYFNSVQLTPFETYRTMPREMVESMTVLGQRMLGWRTMKPSDPNIVGINLIDDKRLENVLQLKAADSPA</sequence>
<gene>
    <name evidence="10" type="primary">ftmOx1</name>
    <name evidence="11" type="synonym">ftmF</name>
</gene>